<keyword id="KW-0560">Oxidoreductase</keyword>
<comment type="function">
    <text evidence="1">The glycine cleavage system catalyzes the degradation of glycine. The P protein binds the alpha-amino group of glycine through its pyridoxal phosphate cofactor; CO(2) is released and the remaining methylamine moiety is then transferred to the lipoamide cofactor of the H protein.</text>
</comment>
<comment type="catalytic activity">
    <reaction evidence="1">
        <text>N(6)-[(R)-lipoyl]-L-lysyl-[glycine-cleavage complex H protein] + glycine + H(+) = N(6)-[(R)-S(8)-aminomethyldihydrolipoyl]-L-lysyl-[glycine-cleavage complex H protein] + CO2</text>
        <dbReference type="Rhea" id="RHEA:24304"/>
        <dbReference type="Rhea" id="RHEA-COMP:10494"/>
        <dbReference type="Rhea" id="RHEA-COMP:10495"/>
        <dbReference type="ChEBI" id="CHEBI:15378"/>
        <dbReference type="ChEBI" id="CHEBI:16526"/>
        <dbReference type="ChEBI" id="CHEBI:57305"/>
        <dbReference type="ChEBI" id="CHEBI:83099"/>
        <dbReference type="ChEBI" id="CHEBI:83143"/>
        <dbReference type="EC" id="1.4.4.2"/>
    </reaction>
</comment>
<comment type="subunit">
    <text evidence="1">The glycine cleavage system is composed of four proteins: P, T, L and H. In this organism, the P 'protein' is a heterodimer of two subunits.</text>
</comment>
<comment type="similarity">
    <text evidence="1">Belongs to the GcvP family. N-terminal subunit subfamily.</text>
</comment>
<evidence type="ECO:0000255" key="1">
    <source>
        <dbReference type="HAMAP-Rule" id="MF_00712"/>
    </source>
</evidence>
<organism>
    <name type="scientific">Francisella tularensis subsp. novicida (strain U112)</name>
    <dbReference type="NCBI Taxonomy" id="401614"/>
    <lineage>
        <taxon>Bacteria</taxon>
        <taxon>Pseudomonadati</taxon>
        <taxon>Pseudomonadota</taxon>
        <taxon>Gammaproteobacteria</taxon>
        <taxon>Thiotrichales</taxon>
        <taxon>Francisellaceae</taxon>
        <taxon>Francisella</taxon>
    </lineage>
</organism>
<sequence length="455" mass="49686">MSFIPHKLEQIKKMLDTIGASSVDQLFDEIPRHLRADTLKIKDGINEIQLANLMRKRANKNHHNTNFIGAGAYSHHIPAAIWDIVARGEFYTAYTPYQAEASQGGLQVIYEFQTMMAGLTGMDASNASMYDGATALAESVLMAIRSNKKAKSQKVLIAEALHPTYLRVLETITKHQGIEFDIINLDSKNGKTDVTKLEDFANTDYAAVVIQSPNFLGQLADVDGITNWAHKHGALVIAVTNPMSLAILKSPAEWGDNGADIVCGEGQPMGVPLASGGPYFGFMTCKMAHVRQMPGRIVGRTVDLDGNEGFCLTLQAREQHIRRAKATSNICTNQGLMVTAATIYMSLLGAEGLERVASISHENTQTLATELAKINGVSIRFNSAFFNEVVIDLPINAETFVTEMEKEGIDAGYFLGEYHSDLANSIMVCATEIHTSEDIKEYIEATKKVLARIGG</sequence>
<accession>A0Q587</accession>
<protein>
    <recommendedName>
        <fullName evidence="1">Probable glycine dehydrogenase (decarboxylating) subunit 1</fullName>
        <ecNumber evidence="1">1.4.4.2</ecNumber>
    </recommendedName>
    <alternativeName>
        <fullName evidence="1">Glycine cleavage system P-protein subunit 1</fullName>
    </alternativeName>
    <alternativeName>
        <fullName evidence="1">Glycine decarboxylase subunit 1</fullName>
    </alternativeName>
    <alternativeName>
        <fullName evidence="1">Glycine dehydrogenase (aminomethyl-transferring) subunit 1</fullName>
    </alternativeName>
</protein>
<dbReference type="EC" id="1.4.4.2" evidence="1"/>
<dbReference type="EMBL" id="CP000439">
    <property type="protein sequence ID" value="ABK89402.1"/>
    <property type="molecule type" value="Genomic_DNA"/>
</dbReference>
<dbReference type="RefSeq" id="WP_003038515.1">
    <property type="nucleotide sequence ID" value="NZ_CP009633.1"/>
</dbReference>
<dbReference type="SMR" id="A0Q587"/>
<dbReference type="KEGG" id="ftn:FTN_0507"/>
<dbReference type="KEGG" id="ftx:AW25_1522"/>
<dbReference type="BioCyc" id="FTUL401614:G1G75-529-MONOMER"/>
<dbReference type="Proteomes" id="UP000000762">
    <property type="component" value="Chromosome"/>
</dbReference>
<dbReference type="GO" id="GO:0004375">
    <property type="term" value="F:glycine dehydrogenase (decarboxylating) activity"/>
    <property type="evidence" value="ECO:0007669"/>
    <property type="project" value="UniProtKB-EC"/>
</dbReference>
<dbReference type="GO" id="GO:0019464">
    <property type="term" value="P:glycine decarboxylation via glycine cleavage system"/>
    <property type="evidence" value="ECO:0007669"/>
    <property type="project" value="UniProtKB-UniRule"/>
</dbReference>
<dbReference type="GO" id="GO:0009116">
    <property type="term" value="P:nucleoside metabolic process"/>
    <property type="evidence" value="ECO:0007669"/>
    <property type="project" value="InterPro"/>
</dbReference>
<dbReference type="CDD" id="cd00613">
    <property type="entry name" value="GDC-P"/>
    <property type="match status" value="1"/>
</dbReference>
<dbReference type="Gene3D" id="3.90.1150.10">
    <property type="entry name" value="Aspartate Aminotransferase, domain 1"/>
    <property type="match status" value="1"/>
</dbReference>
<dbReference type="Gene3D" id="3.40.640.10">
    <property type="entry name" value="Type I PLP-dependent aspartate aminotransferase-like (Major domain)"/>
    <property type="match status" value="1"/>
</dbReference>
<dbReference type="HAMAP" id="MF_00712">
    <property type="entry name" value="GcvPA"/>
    <property type="match status" value="1"/>
</dbReference>
<dbReference type="InterPro" id="IPR023010">
    <property type="entry name" value="GcvPA"/>
</dbReference>
<dbReference type="InterPro" id="IPR049315">
    <property type="entry name" value="GDC-P_N"/>
</dbReference>
<dbReference type="InterPro" id="IPR020581">
    <property type="entry name" value="GDC_P"/>
</dbReference>
<dbReference type="InterPro" id="IPR015424">
    <property type="entry name" value="PyrdxlP-dep_Trfase"/>
</dbReference>
<dbReference type="InterPro" id="IPR015421">
    <property type="entry name" value="PyrdxlP-dep_Trfase_major"/>
</dbReference>
<dbReference type="InterPro" id="IPR015422">
    <property type="entry name" value="PyrdxlP-dep_Trfase_small"/>
</dbReference>
<dbReference type="NCBIfam" id="NF001696">
    <property type="entry name" value="PRK00451.1"/>
    <property type="match status" value="1"/>
</dbReference>
<dbReference type="PANTHER" id="PTHR42806">
    <property type="entry name" value="GLYCINE CLEAVAGE SYSTEM P-PROTEIN"/>
    <property type="match status" value="1"/>
</dbReference>
<dbReference type="PANTHER" id="PTHR42806:SF1">
    <property type="entry name" value="GLYCINE DEHYDROGENASE (DECARBOXYLATING)"/>
    <property type="match status" value="1"/>
</dbReference>
<dbReference type="Pfam" id="PF02347">
    <property type="entry name" value="GDC-P"/>
    <property type="match status" value="1"/>
</dbReference>
<dbReference type="PIRSF" id="PIRSF006815">
    <property type="entry name" value="GcvPA"/>
    <property type="match status" value="1"/>
</dbReference>
<dbReference type="SUPFAM" id="SSF53383">
    <property type="entry name" value="PLP-dependent transferases"/>
    <property type="match status" value="1"/>
</dbReference>
<gene>
    <name evidence="1" type="primary">gcvPA</name>
    <name type="ordered locus">FTN_0507</name>
</gene>
<feature type="chain" id="PRO_1000045652" description="Probable glycine dehydrogenase (decarboxylating) subunit 1">
    <location>
        <begin position="1"/>
        <end position="455"/>
    </location>
</feature>
<reference key="1">
    <citation type="journal article" date="2007" name="Genome Biol.">
        <title>Comparison of Francisella tularensis genomes reveals evolutionary events associated with the emergence of human pathogenic strains.</title>
        <authorList>
            <person name="Rohmer L."/>
            <person name="Fong C."/>
            <person name="Abmayr S."/>
            <person name="Wasnick M."/>
            <person name="Larson Freeman T.J."/>
            <person name="Radey M."/>
            <person name="Guina T."/>
            <person name="Svensson K."/>
            <person name="Hayden H.S."/>
            <person name="Jacobs M."/>
            <person name="Gallagher L.A."/>
            <person name="Manoil C."/>
            <person name="Ernst R.K."/>
            <person name="Drees B."/>
            <person name="Buckley D."/>
            <person name="Haugen E."/>
            <person name="Bovee D."/>
            <person name="Zhou Y."/>
            <person name="Chang J."/>
            <person name="Levy R."/>
            <person name="Lim R."/>
            <person name="Gillett W."/>
            <person name="Guenthener D."/>
            <person name="Kang A."/>
            <person name="Shaffer S.A."/>
            <person name="Taylor G."/>
            <person name="Chen J."/>
            <person name="Gallis B."/>
            <person name="D'Argenio D.A."/>
            <person name="Forsman M."/>
            <person name="Olson M.V."/>
            <person name="Goodlett D.R."/>
            <person name="Kaul R."/>
            <person name="Miller S.I."/>
            <person name="Brittnacher M.J."/>
        </authorList>
    </citation>
    <scope>NUCLEOTIDE SEQUENCE [LARGE SCALE GENOMIC DNA]</scope>
    <source>
        <strain>U112</strain>
    </source>
</reference>
<name>GCSPA_FRATN</name>
<proteinExistence type="inferred from homology"/>